<sequence>MNILELSEQEVVRRNSLEQLRNLGIDPYPAAEYTVNAYSAEIKRNFNGDENVAKRQVSIAGRIMSRRIMGKATFMELQDAEGRIQIYITRDDICPGEDKEFYNTVVKKCTDIGDFIGVKGYVFRTQMGEISVHVQEMTFLSKAIRPLPVVKEKDGEVFDGFTDPEQRYRQRYVDLVVNSHVKDIFLKRTMVFNSMRSFFNECGYIEVDTPVLQSIPGGAAARPFITHHNALDIPLYLRIANELYLKRLIVGGFDGVYEFSRNFRNEGMDRTHNPEFTAMEIYVAYKDYNWMMNFTEQMLERICMDVLGTTQMKVGGKLIDFKAPYKRVTMIEAIHEHTGIDISGMNEAELRQVCDKLGVEHNETMGKGKLIDEIFGEKCEKNYIQPTFITDYPKEMSPLTKEHRTNPELTERFELMVNGKELANAYSELNDPIDQRERFEEQLKLSEKGDDEAMYIDNDFIRALEYGMPPTSGMGIGMDRLVMLLTGQESIQEVLLFPQMKPEKVAPRDTKEKFAVCGVPEEWVPVLHKAGYLTVQSMREDKPGKVMQQLMDINKKYKLGLAGLNLETVSAWQEAPYE</sequence>
<gene>
    <name evidence="1" type="primary">lysS</name>
    <name type="ordered locus">PG_1370</name>
</gene>
<name>SYK_PORGI</name>
<reference key="1">
    <citation type="journal article" date="2003" name="J. Bacteriol.">
        <title>Complete genome sequence of the oral pathogenic bacterium Porphyromonas gingivalis strain W83.</title>
        <authorList>
            <person name="Nelson K.E."/>
            <person name="Fleischmann R.D."/>
            <person name="DeBoy R.T."/>
            <person name="Paulsen I.T."/>
            <person name="Fouts D.E."/>
            <person name="Eisen J.A."/>
            <person name="Daugherty S.C."/>
            <person name="Dodson R.J."/>
            <person name="Durkin A.S."/>
            <person name="Gwinn M.L."/>
            <person name="Haft D.H."/>
            <person name="Kolonay J.F."/>
            <person name="Nelson W.C."/>
            <person name="Mason T.M."/>
            <person name="Tallon L."/>
            <person name="Gray J."/>
            <person name="Granger D."/>
            <person name="Tettelin H."/>
            <person name="Dong H."/>
            <person name="Galvin J.L."/>
            <person name="Duncan M.J."/>
            <person name="Dewhirst F.E."/>
            <person name="Fraser C.M."/>
        </authorList>
    </citation>
    <scope>NUCLEOTIDE SEQUENCE [LARGE SCALE GENOMIC DNA]</scope>
    <source>
        <strain>ATCC BAA-308 / W83</strain>
    </source>
</reference>
<keyword id="KW-0030">Aminoacyl-tRNA synthetase</keyword>
<keyword id="KW-0067">ATP-binding</keyword>
<keyword id="KW-0963">Cytoplasm</keyword>
<keyword id="KW-0436">Ligase</keyword>
<keyword id="KW-0460">Magnesium</keyword>
<keyword id="KW-0479">Metal-binding</keyword>
<keyword id="KW-0547">Nucleotide-binding</keyword>
<keyword id="KW-0648">Protein biosynthesis</keyword>
<keyword id="KW-1185">Reference proteome</keyword>
<feature type="chain" id="PRO_0000152664" description="Lysine--tRNA ligase">
    <location>
        <begin position="1"/>
        <end position="578"/>
    </location>
</feature>
<feature type="binding site" evidence="1">
    <location>
        <position position="414"/>
    </location>
    <ligand>
        <name>Mg(2+)</name>
        <dbReference type="ChEBI" id="CHEBI:18420"/>
        <label>1</label>
    </ligand>
</feature>
<feature type="binding site" evidence="1">
    <location>
        <position position="421"/>
    </location>
    <ligand>
        <name>Mg(2+)</name>
        <dbReference type="ChEBI" id="CHEBI:18420"/>
        <label>1</label>
    </ligand>
</feature>
<feature type="binding site" evidence="1">
    <location>
        <position position="421"/>
    </location>
    <ligand>
        <name>Mg(2+)</name>
        <dbReference type="ChEBI" id="CHEBI:18420"/>
        <label>2</label>
    </ligand>
</feature>
<comment type="catalytic activity">
    <reaction evidence="1">
        <text>tRNA(Lys) + L-lysine + ATP = L-lysyl-tRNA(Lys) + AMP + diphosphate</text>
        <dbReference type="Rhea" id="RHEA:20792"/>
        <dbReference type="Rhea" id="RHEA-COMP:9696"/>
        <dbReference type="Rhea" id="RHEA-COMP:9697"/>
        <dbReference type="ChEBI" id="CHEBI:30616"/>
        <dbReference type="ChEBI" id="CHEBI:32551"/>
        <dbReference type="ChEBI" id="CHEBI:33019"/>
        <dbReference type="ChEBI" id="CHEBI:78442"/>
        <dbReference type="ChEBI" id="CHEBI:78529"/>
        <dbReference type="ChEBI" id="CHEBI:456215"/>
        <dbReference type="EC" id="6.1.1.6"/>
    </reaction>
</comment>
<comment type="cofactor">
    <cofactor evidence="1">
        <name>Mg(2+)</name>
        <dbReference type="ChEBI" id="CHEBI:18420"/>
    </cofactor>
    <text evidence="1">Binds 3 Mg(2+) ions per subunit.</text>
</comment>
<comment type="subunit">
    <text evidence="1">Homodimer.</text>
</comment>
<comment type="subcellular location">
    <subcellularLocation>
        <location evidence="1">Cytoplasm</location>
    </subcellularLocation>
</comment>
<comment type="similarity">
    <text evidence="1">Belongs to the class-II aminoacyl-tRNA synthetase family.</text>
</comment>
<proteinExistence type="inferred from homology"/>
<accession>Q7MUV7</accession>
<dbReference type="EC" id="6.1.1.6" evidence="1"/>
<dbReference type="EMBL" id="AE015924">
    <property type="protein sequence ID" value="AAQ66434.1"/>
    <property type="molecule type" value="Genomic_DNA"/>
</dbReference>
<dbReference type="RefSeq" id="WP_005874321.1">
    <property type="nucleotide sequence ID" value="NC_002950.2"/>
</dbReference>
<dbReference type="SMR" id="Q7MUV7"/>
<dbReference type="STRING" id="242619.PG_1370"/>
<dbReference type="EnsemblBacteria" id="AAQ66434">
    <property type="protein sequence ID" value="AAQ66434"/>
    <property type="gene ID" value="PG_1370"/>
</dbReference>
<dbReference type="KEGG" id="pgi:PG_1370"/>
<dbReference type="PATRIC" id="fig|242619.8.peg.1275"/>
<dbReference type="eggNOG" id="COG1190">
    <property type="taxonomic scope" value="Bacteria"/>
</dbReference>
<dbReference type="HOGENOM" id="CLU_008255_6_0_10"/>
<dbReference type="BioCyc" id="PGIN242619:G1G02-1276-MONOMER"/>
<dbReference type="Proteomes" id="UP000000588">
    <property type="component" value="Chromosome"/>
</dbReference>
<dbReference type="GO" id="GO:0005829">
    <property type="term" value="C:cytosol"/>
    <property type="evidence" value="ECO:0007669"/>
    <property type="project" value="TreeGrafter"/>
</dbReference>
<dbReference type="GO" id="GO:0005524">
    <property type="term" value="F:ATP binding"/>
    <property type="evidence" value="ECO:0007669"/>
    <property type="project" value="UniProtKB-UniRule"/>
</dbReference>
<dbReference type="GO" id="GO:0004824">
    <property type="term" value="F:lysine-tRNA ligase activity"/>
    <property type="evidence" value="ECO:0007669"/>
    <property type="project" value="UniProtKB-UniRule"/>
</dbReference>
<dbReference type="GO" id="GO:0000287">
    <property type="term" value="F:magnesium ion binding"/>
    <property type="evidence" value="ECO:0007669"/>
    <property type="project" value="UniProtKB-UniRule"/>
</dbReference>
<dbReference type="GO" id="GO:0000049">
    <property type="term" value="F:tRNA binding"/>
    <property type="evidence" value="ECO:0007669"/>
    <property type="project" value="TreeGrafter"/>
</dbReference>
<dbReference type="GO" id="GO:0006430">
    <property type="term" value="P:lysyl-tRNA aminoacylation"/>
    <property type="evidence" value="ECO:0007669"/>
    <property type="project" value="UniProtKB-UniRule"/>
</dbReference>
<dbReference type="CDD" id="cd00775">
    <property type="entry name" value="LysRS_core"/>
    <property type="match status" value="1"/>
</dbReference>
<dbReference type="CDD" id="cd04322">
    <property type="entry name" value="LysRS_N"/>
    <property type="match status" value="1"/>
</dbReference>
<dbReference type="FunFam" id="2.40.50.140:FF:000024">
    <property type="entry name" value="Lysine--tRNA ligase"/>
    <property type="match status" value="1"/>
</dbReference>
<dbReference type="FunFam" id="3.30.930.10:FF:000238">
    <property type="entry name" value="Lysine--tRNA ligase"/>
    <property type="match status" value="1"/>
</dbReference>
<dbReference type="Gene3D" id="3.30.930.10">
    <property type="entry name" value="Bira Bifunctional Protein, Domain 2"/>
    <property type="match status" value="1"/>
</dbReference>
<dbReference type="Gene3D" id="2.40.50.140">
    <property type="entry name" value="Nucleic acid-binding proteins"/>
    <property type="match status" value="1"/>
</dbReference>
<dbReference type="HAMAP" id="MF_00252">
    <property type="entry name" value="Lys_tRNA_synth_class2"/>
    <property type="match status" value="1"/>
</dbReference>
<dbReference type="InterPro" id="IPR004364">
    <property type="entry name" value="Aa-tRNA-synt_II"/>
</dbReference>
<dbReference type="InterPro" id="IPR006195">
    <property type="entry name" value="aa-tRNA-synth_II"/>
</dbReference>
<dbReference type="InterPro" id="IPR045864">
    <property type="entry name" value="aa-tRNA-synth_II/BPL/LPL"/>
</dbReference>
<dbReference type="InterPro" id="IPR002313">
    <property type="entry name" value="Lys-tRNA-ligase_II"/>
</dbReference>
<dbReference type="InterPro" id="IPR044136">
    <property type="entry name" value="Lys-tRNA-ligase_II_N"/>
</dbReference>
<dbReference type="InterPro" id="IPR018149">
    <property type="entry name" value="Lys-tRNA-synth_II_C"/>
</dbReference>
<dbReference type="InterPro" id="IPR012340">
    <property type="entry name" value="NA-bd_OB-fold"/>
</dbReference>
<dbReference type="InterPro" id="IPR004365">
    <property type="entry name" value="NA-bd_OB_tRNA"/>
</dbReference>
<dbReference type="NCBIfam" id="TIGR00499">
    <property type="entry name" value="lysS_bact"/>
    <property type="match status" value="1"/>
</dbReference>
<dbReference type="NCBIfam" id="NF001756">
    <property type="entry name" value="PRK00484.1"/>
    <property type="match status" value="1"/>
</dbReference>
<dbReference type="PANTHER" id="PTHR42918:SF15">
    <property type="entry name" value="LYSINE--TRNA LIGASE, CHLOROPLASTIC_MITOCHONDRIAL"/>
    <property type="match status" value="1"/>
</dbReference>
<dbReference type="PANTHER" id="PTHR42918">
    <property type="entry name" value="LYSYL-TRNA SYNTHETASE"/>
    <property type="match status" value="1"/>
</dbReference>
<dbReference type="Pfam" id="PF00152">
    <property type="entry name" value="tRNA-synt_2"/>
    <property type="match status" value="1"/>
</dbReference>
<dbReference type="Pfam" id="PF01336">
    <property type="entry name" value="tRNA_anti-codon"/>
    <property type="match status" value="1"/>
</dbReference>
<dbReference type="PRINTS" id="PR00982">
    <property type="entry name" value="TRNASYNTHLYS"/>
</dbReference>
<dbReference type="SUPFAM" id="SSF55681">
    <property type="entry name" value="Class II aaRS and biotin synthetases"/>
    <property type="match status" value="1"/>
</dbReference>
<dbReference type="SUPFAM" id="SSF50249">
    <property type="entry name" value="Nucleic acid-binding proteins"/>
    <property type="match status" value="1"/>
</dbReference>
<dbReference type="PROSITE" id="PS50862">
    <property type="entry name" value="AA_TRNA_LIGASE_II"/>
    <property type="match status" value="1"/>
</dbReference>
<protein>
    <recommendedName>
        <fullName evidence="1">Lysine--tRNA ligase</fullName>
        <ecNumber evidence="1">6.1.1.6</ecNumber>
    </recommendedName>
    <alternativeName>
        <fullName evidence="1">Lysyl-tRNA synthetase</fullName>
        <shortName evidence="1">LysRS</shortName>
    </alternativeName>
</protein>
<evidence type="ECO:0000255" key="1">
    <source>
        <dbReference type="HAMAP-Rule" id="MF_00252"/>
    </source>
</evidence>
<organism>
    <name type="scientific">Porphyromonas gingivalis (strain ATCC BAA-308 / W83)</name>
    <dbReference type="NCBI Taxonomy" id="242619"/>
    <lineage>
        <taxon>Bacteria</taxon>
        <taxon>Pseudomonadati</taxon>
        <taxon>Bacteroidota</taxon>
        <taxon>Bacteroidia</taxon>
        <taxon>Bacteroidales</taxon>
        <taxon>Porphyromonadaceae</taxon>
        <taxon>Porphyromonas</taxon>
    </lineage>
</organism>